<feature type="initiator methionine" description="Removed" evidence="2">
    <location>
        <position position="1"/>
    </location>
</feature>
<feature type="chain" id="PRO_0000191007" description="Homer protein homolog 1">
    <location>
        <begin position="2"/>
        <end position="366"/>
    </location>
</feature>
<feature type="domain" description="WH1" evidence="5">
    <location>
        <begin position="1"/>
        <end position="110"/>
    </location>
</feature>
<feature type="region of interest" description="Disordered" evidence="6">
    <location>
        <begin position="114"/>
        <end position="189"/>
    </location>
</feature>
<feature type="region of interest" description="Required for tetramerization" evidence="15">
    <location>
        <begin position="302"/>
        <end position="366"/>
    </location>
</feature>
<feature type="coiled-coil region" evidence="4">
    <location>
        <begin position="193"/>
        <end position="364"/>
    </location>
</feature>
<feature type="compositionally biased region" description="Polar residues" evidence="6">
    <location>
        <begin position="138"/>
        <end position="147"/>
    </location>
</feature>
<feature type="modified residue" description="N-acetylglycine" evidence="2">
    <location>
        <position position="2"/>
    </location>
</feature>
<feature type="modified residue" description="Phosphoserine" evidence="3">
    <location>
        <position position="318"/>
    </location>
</feature>
<feature type="splice variant" id="VSP_009066" description="In isoform 2." evidence="24">
    <location>
        <begin position="176"/>
        <end position="187"/>
    </location>
</feature>
<feature type="splice variant" id="VSP_009067" description="In isoform 3." evidence="21 22 23 24 25">
    <original>SAGDRTQGLSH</original>
    <variation>RYTFNSAIMIK</variation>
    <location>
        <begin position="176"/>
        <end position="186"/>
    </location>
</feature>
<feature type="splice variant" id="VSP_009068" description="In isoform 3." evidence="21 22 23 24 25">
    <location>
        <begin position="187"/>
        <end position="366"/>
    </location>
</feature>
<feature type="mutagenesis site" description="Disrupts binding to both GRM1 and SHANK3. Does not form the high-order complex with SHANK1." evidence="8 15">
    <original>W</original>
    <variation>A</variation>
    <location>
        <position position="24"/>
    </location>
</feature>
<feature type="mutagenesis site" description="Disrupts binding to GRM1." evidence="8">
    <original>W</original>
    <variation>Y</variation>
    <location>
        <position position="24"/>
    </location>
</feature>
<feature type="mutagenesis site" description="Normal binding." evidence="8">
    <original>T</original>
    <variation>A</variation>
    <location>
        <position position="70"/>
    </location>
</feature>
<feature type="mutagenesis site" description="Disrupts binding to SHANK3." evidence="8">
    <original>T</original>
    <variation>E</variation>
    <location>
        <position position="70"/>
    </location>
</feature>
<feature type="mutagenesis site" description="Eliminates binding to both GRM1 and SHANK3." evidence="8">
    <original>F</original>
    <variation>A</variation>
    <location>
        <position position="74"/>
    </location>
</feature>
<feature type="mutagenesis site" description="Normal binding." evidence="8">
    <original>Q</original>
    <variation>A</variation>
    <location>
        <position position="76"/>
    </location>
</feature>
<feature type="mutagenesis site" description="Normal binding." evidence="8">
    <original>Q</original>
    <variation>R</variation>
    <location>
        <position position="76"/>
    </location>
</feature>
<feature type="mutagenesis site" description="Diminishes binding to GRM1." evidence="8">
    <original>V</original>
    <variation>A</variation>
    <location>
        <position position="85"/>
    </location>
</feature>
<feature type="mutagenesis site" description="Eliminates binding to both GRM1 and SHANK3." evidence="8">
    <original>G</original>
    <variation>A</variation>
    <location>
        <position position="89"/>
    </location>
</feature>
<feature type="mutagenesis site" description="Eliminates binding to both GRM1 and SHANK3." evidence="8">
    <original>G</original>
    <variation>N</variation>
    <location>
        <position position="89"/>
    </location>
</feature>
<feature type="mutagenesis site" description="Dimeric form; when associated with E-349. Does not form the high-order complex with SHANK1; when associated with E-349. Does not change its interaction with STX12; when associated with E-349. Reduces localization to the spine; when associated with E-349. Affects dendritic spine structure; when associated with E-349. Decreases synaptic transmission; when associated with E-349. Does not affect glutamate receptors ratio; when associated with E-349." evidence="15">
    <original>I</original>
    <variation>R</variation>
    <location>
        <position position="344"/>
    </location>
</feature>
<feature type="mutagenesis site" description="Dimeric form; when associated with R-344. Does not form the high-order complex with SHANK1; when associated with R-344. Does not change its interaction with STX12; when associated with R-344. Reduces localization to the spine; when associated with R-344. Affects dendritic spine structure; when associated with R-344. Decreases synaptic transmission; when associated with R-344. Does not affect glutamate receptors ratio; when associated with R-344." evidence="15">
    <original>I</original>
    <variation>E</variation>
    <location>
        <position position="349"/>
    </location>
</feature>
<feature type="sequence conflict" description="In Ref. 5; BAA32477." evidence="26" ref="5">
    <original>L</original>
    <variation>R</variation>
    <location>
        <position position="268"/>
    </location>
</feature>
<feature type="strand" evidence="29">
    <location>
        <begin position="3"/>
        <end position="16"/>
    </location>
</feature>
<feature type="turn" evidence="29">
    <location>
        <begin position="18"/>
        <end position="20"/>
    </location>
</feature>
<feature type="strand" evidence="29">
    <location>
        <begin position="23"/>
        <end position="27"/>
    </location>
</feature>
<feature type="strand" evidence="29">
    <location>
        <begin position="32"/>
        <end position="39"/>
    </location>
</feature>
<feature type="turn" evidence="29">
    <location>
        <begin position="40"/>
        <end position="43"/>
    </location>
</feature>
<feature type="strand" evidence="29">
    <location>
        <begin position="44"/>
        <end position="51"/>
    </location>
</feature>
<feature type="strand" evidence="29">
    <location>
        <begin position="54"/>
        <end position="60"/>
    </location>
</feature>
<feature type="strand" evidence="29">
    <location>
        <begin position="71"/>
        <end position="79"/>
    </location>
</feature>
<feature type="turn" evidence="29">
    <location>
        <begin position="80"/>
        <end position="83"/>
    </location>
</feature>
<feature type="strand" evidence="29">
    <location>
        <begin position="84"/>
        <end position="89"/>
    </location>
</feature>
<feature type="helix" evidence="29">
    <location>
        <begin position="93"/>
        <end position="110"/>
    </location>
</feature>
<feature type="helix" evidence="30">
    <location>
        <begin position="302"/>
        <end position="362"/>
    </location>
</feature>
<comment type="function">
    <text evidence="2 12 15">Postsynaptic density scaffolding protein. Binds and cross-links cytoplasmic regions of GRM1, GRM5, ITPR1, DNM3, RYR1, RYR2, SHANK1 and SHANK3. By physically linking GRM1 and GRM5 with ER-associated ITPR1 receptors, it aids the coupling of surface receptors to intracellular calcium release. May also couple GRM1 to PI3 kinase through its interaction with AGAP2. Differentially regulates the functions of the calcium activated channel ryanodine receptors RYR1 and RYR2. Isoform 1 decreases the activity of RYR2, and increases the activity of RYR1, whereas isoform 3 counteracts the effects by competing for binding sites. Isoform 1 regulates the trafficking and surface expression of GRM5. Isoform 3 acts as a natural dominant negative, in dynamic competition with constitutively expressed isoform 1, and isoform 2 to regulate synaptic metabotropic glutamate function. Isoform 3, may be involved in the structural changes that occur at synapses during long-lasting neuronal plasticity and development. Forms a high-order complex with SHANK1, which in turn is necessary for the structural and functional integrity of dendritic spines (PubMed:19345194). Negatively regulates T cell activation by inhibiting the calcineurin-NFAT pathway. Acts by competing with calcineurin/PPP3CA for NFAT protein binding, hence preventing NFAT activation by PPP3CA (By similarity).</text>
</comment>
<comment type="subunit">
    <text evidence="2 3 7 8 10 11 12 13 14 15 17 18 19 20">Tetramer; this tetrameric structure is critical for forming the high-order complex with SHANK1, which in turn is necessary for the structural and functional integrity of dendritic spines (PubMed:19345194). Interacts with GRM1, GRM5, ITPR1, DYN3, RYR1, RYR2 and SHANK3 (PubMed:10433269, PubMed:10798399, PubMed:12810060, PubMed:12887973, PubMed:9069287, PubMed:9727012, PubMed:9808458, PubMed:9808459). Interacts with IFT57 and OPHN1 (PubMed:15034583). Isoform 1 and isoform 2 encode coiled-coil structures that mediate homo- and heteromultimerization. Interacts with SHANK1; forms high-order polymerized complex with a mesh-like network structure, at least composed of SHANK1, HOMER1 and DLGAP1; the complex formation is SHANK1 multimerization dependent (PubMed:10433269, PubMed:19345194). Interacts with NFATC4 (By similarity). Interacts with DAGLA (via PPXXF motif); this interaction is required for the cell membrane localization of DAGLA (PubMed:17584991). Interacts with SRGAP2 (By similarity).</text>
</comment>
<comment type="interaction">
    <interactant intactId="EBI-2338940">
        <id>Q9Z214</id>
    </interactant>
    <interactant intactId="EBI-8795045">
        <id>Q3UVX5</id>
        <label>Grm5</label>
    </interactant>
    <organismsDiffer>true</organismsDiffer>
    <experiments>2</experiments>
</comment>
<comment type="interaction">
    <interactant intactId="EBI-4410552">
        <id>Q9Z214-1</id>
    </interactant>
    <interactant intactId="EBI-4409108">
        <id>Q8CGU4</id>
        <label>Agap2</label>
    </interactant>
    <organismsDiffer>false</organismsDiffer>
    <experiments>4</experiments>
</comment>
<comment type="interaction">
    <interactant intactId="EBI-4410552">
        <id>Q9Z214-1</id>
    </interactant>
    <interactant intactId="EBI-311279">
        <id>Q14CM0</id>
        <label>FRMPD4</label>
    </interactant>
    <organismsDiffer>true</organismsDiffer>
    <experiments>2</experiments>
</comment>
<comment type="interaction">
    <interactant intactId="EBI-4410552">
        <id>Q9Z214-1</id>
    </interactant>
    <interactant intactId="EBI-8795045">
        <id>Q3UVX5</id>
        <label>Grm5</label>
    </interactant>
    <organismsDiffer>true</organismsDiffer>
    <experiments>3</experiments>
</comment>
<comment type="interaction">
    <interactant intactId="EBI-2338999">
        <id>Q9Z214-2</id>
    </interactant>
    <interactant intactId="EBI-2338999">
        <id>Q9Z214-2</id>
        <label>Homer1</label>
    </interactant>
    <organismsDiffer>false</organismsDiffer>
    <experiments>4</experiments>
</comment>
<comment type="interaction">
    <interactant intactId="EBI-2338999">
        <id>Q9Z214-2</id>
    </interactant>
    <interactant intactId="EBI-80909">
        <id>Q9WV48</id>
        <label>Shank1</label>
    </interactant>
    <organismsDiffer>false</organismsDiffer>
    <experiments>4</experiments>
</comment>
<comment type="interaction">
    <interactant intactId="EBI-2339003">
        <id>Q9Z214-3</id>
    </interactant>
    <interactant intactId="EBI-8795045">
        <id>Q3UVX5</id>
        <label>Grm5</label>
    </interactant>
    <organismsDiffer>true</organismsDiffer>
    <experiments>2</experiments>
</comment>
<comment type="subcellular location">
    <subcellularLocation>
        <location evidence="1">Cytoplasm</location>
    </subcellularLocation>
    <subcellularLocation>
        <location evidence="1">Postsynaptic density</location>
    </subcellularLocation>
    <subcellularLocation>
        <location evidence="7">Synapse</location>
    </subcellularLocation>
    <subcellularLocation>
        <location evidence="15 16">Cell projection</location>
        <location evidence="15 16">Dendritic spine</location>
    </subcellularLocation>
    <text evidence="1">Isoform 1 inhibits surface expression of GRM5 causing it to be retained in the endoplasmic reticulum.</text>
</comment>
<comment type="alternative products">
    <event type="alternative splicing"/>
    <isoform>
        <id>Q9Z214-1</id>
        <name>1</name>
        <name>1c</name>
        <name>Vesl-1L</name>
        <sequence type="displayed"/>
    </isoform>
    <isoform>
        <id>Q9Z214-2</id>
        <name>2</name>
        <name>1b</name>
        <sequence type="described" ref="VSP_009066"/>
    </isoform>
    <isoform>
        <id>Q9Z214-3</id>
        <name>3</name>
        <name>1a</name>
        <name>Vesl</name>
        <sequence type="described" ref="VSP_009067 VSP_009068"/>
    </isoform>
</comment>
<comment type="tissue specificity">
    <text evidence="9">Highly expressed in cortex, Purkinje cells of the cerebellum, hippocampus, striatum and olfactory bulb. Isoform 1 and isoform 3 are expressed in skeletal and cardiac muscle.</text>
</comment>
<comment type="developmental stage">
    <text>In the developing hippocampus, the expression of isoform 1 is high at P8, then decreased with progression of hippocampal development. Isoform 3 expression was constitutively low, and not regulated during hippocampal development.</text>
</comment>
<comment type="induction">
    <molecule>Isoform 3</molecule>
    <text>Induced in the hippocampus, by seizure and synaptic mechanisms in association with long-term potentiation (LTP). It is also induced in the striatum by drugs that alter dopamine signaling.</text>
</comment>
<comment type="domain">
    <text evidence="15">The WH1 domain interacts with the PPXXF motif in GRM1, GRM5, RYR1, RYR2, ITPR1, SHANK 1 and SHANK3. The coiled-Coil domain forms an antiparallel tetrameric arrangement (PubMed:19345194).</text>
</comment>
<comment type="similarity">
    <text evidence="26">Belongs to the Homer family.</text>
</comment>
<comment type="sequence caution" evidence="26">
    <conflict type="erroneous initiation">
        <sequence resource="EMBL-CDS" id="AAC53113"/>
    </conflict>
    <text>Extended N-terminus.</text>
</comment>
<evidence type="ECO:0000250" key="1"/>
<evidence type="ECO:0000250" key="2">
    <source>
        <dbReference type="UniProtKB" id="Q86YM7"/>
    </source>
</evidence>
<evidence type="ECO:0000250" key="3">
    <source>
        <dbReference type="UniProtKB" id="Q9Z2Y3"/>
    </source>
</evidence>
<evidence type="ECO:0000255" key="4"/>
<evidence type="ECO:0000255" key="5">
    <source>
        <dbReference type="PROSITE-ProRule" id="PRU00410"/>
    </source>
</evidence>
<evidence type="ECO:0000256" key="6">
    <source>
        <dbReference type="SAM" id="MobiDB-lite"/>
    </source>
</evidence>
<evidence type="ECO:0000269" key="7">
    <source>
    </source>
</evidence>
<evidence type="ECO:0000269" key="8">
    <source>
    </source>
</evidence>
<evidence type="ECO:0000269" key="9">
    <source>
    </source>
</evidence>
<evidence type="ECO:0000269" key="10">
    <source>
    </source>
</evidence>
<evidence type="ECO:0000269" key="11">
    <source>
    </source>
</evidence>
<evidence type="ECO:0000269" key="12">
    <source>
    </source>
</evidence>
<evidence type="ECO:0000269" key="13">
    <source>
    </source>
</evidence>
<evidence type="ECO:0000269" key="14">
    <source>
    </source>
</evidence>
<evidence type="ECO:0000269" key="15">
    <source>
    </source>
</evidence>
<evidence type="ECO:0000269" key="16">
    <source>
    </source>
</evidence>
<evidence type="ECO:0000269" key="17">
    <source>
    </source>
</evidence>
<evidence type="ECO:0000269" key="18">
    <source>
    </source>
</evidence>
<evidence type="ECO:0000269" key="19">
    <source>
    </source>
</evidence>
<evidence type="ECO:0000269" key="20">
    <source>
    </source>
</evidence>
<evidence type="ECO:0000303" key="21">
    <source>
    </source>
</evidence>
<evidence type="ECO:0000303" key="22">
    <source>
    </source>
</evidence>
<evidence type="ECO:0000303" key="23">
    <source>
    </source>
</evidence>
<evidence type="ECO:0000303" key="24">
    <source>
    </source>
</evidence>
<evidence type="ECO:0000303" key="25">
    <source>
    </source>
</evidence>
<evidence type="ECO:0000305" key="26"/>
<evidence type="ECO:0000312" key="27">
    <source>
        <dbReference type="RGD" id="628725"/>
    </source>
</evidence>
<evidence type="ECO:0007744" key="28">
    <source>
        <dbReference type="PDB" id="3CVE"/>
    </source>
</evidence>
<evidence type="ECO:0007829" key="29">
    <source>
        <dbReference type="PDB" id="1DDW"/>
    </source>
</evidence>
<evidence type="ECO:0007829" key="30">
    <source>
        <dbReference type="PDB" id="3CVE"/>
    </source>
</evidence>
<reference key="1">
    <citation type="journal article" date="1997" name="Nature">
        <title>Homer: a protein that selectively binds metabotropic glutamate receptors.</title>
        <authorList>
            <person name="Brakeman P.R."/>
            <person name="Lanahan A.A."/>
            <person name="O'Brien R."/>
            <person name="Roche K."/>
            <person name="Barnes C.A."/>
            <person name="Huganir R.L."/>
            <person name="Worley P.F."/>
        </authorList>
    </citation>
    <scope>NUCLEOTIDE SEQUENCE [MRNA] (ISOFORM 3)</scope>
    <scope>INTERACTION WITH GRM1 AND GRM5</scope>
    <source>
        <strain>Sprague-Dawley</strain>
        <tissue>Hippocampus</tissue>
    </source>
</reference>
<reference key="2">
    <citation type="journal article" date="1997" name="FEBS Lett.">
        <title>Vesl, a gene encoding VASP/Ena family related protein, is upregulated during seizure, long-term potentiation and synaptogenesis.</title>
        <authorList>
            <person name="Kato A."/>
            <person name="Ozawa F."/>
            <person name="Saitoh Y."/>
            <person name="Hirai K."/>
            <person name="Inokuchi K."/>
        </authorList>
    </citation>
    <scope>NUCLEOTIDE SEQUENCE [MRNA] (ISOFORM 3)</scope>
    <scope>CHARACTERIZATION</scope>
    <source>
        <strain>Wistar</strain>
        <tissue>Hippocampus</tissue>
    </source>
</reference>
<reference key="3">
    <citation type="journal article" date="1998" name="Neuron">
        <title>Homer regulates the association of group 1 metabotropic glutamate receptors with multivalent complexes of homer-related, synaptic proteins.</title>
        <authorList>
            <person name="Xiao B."/>
            <person name="Tu J.C."/>
            <person name="Petralia R.S."/>
            <person name="Yuan J.P."/>
            <person name="Doan A."/>
            <person name="Breder C.D."/>
            <person name="Ruggiero A."/>
            <person name="Lanahan A.A."/>
            <person name="Wenthold R.J."/>
            <person name="Worley P.F."/>
        </authorList>
    </citation>
    <scope>NUCLEOTIDE SEQUENCE [MRNA] (ISOFORMS 2 AND 3)</scope>
    <scope>CHARACTERIZATION</scope>
    <scope>INTERACTION WITH GRM1 AND GRM5</scope>
    <source>
        <strain>Sprague-Dawley</strain>
        <tissue>Hippocampus</tissue>
    </source>
</reference>
<reference key="4">
    <citation type="journal article" date="1998" name="FEBS Lett.">
        <title>Isolation of PSD-Zip45, a novel Homer/vesl family protein containing leucine zipper motifs, from rat brain.</title>
        <authorList>
            <person name="Sun J."/>
            <person name="Tadokoro S."/>
            <person name="Imanaka T."/>
            <person name="Murakami S.D."/>
            <person name="Nakamura M."/>
            <person name="Kashiwada K."/>
            <person name="Ko J."/>
            <person name="Nishida W."/>
            <person name="Sobue K."/>
        </authorList>
    </citation>
    <scope>NUCLEOTIDE SEQUENCE [MRNA] (ISOFORM 3)</scope>
</reference>
<reference key="5">
    <citation type="journal article" date="1998" name="J. Biol. Chem.">
        <title>Novel members of the Vesl/Homer family of PDZ-proteins that bind metabotropic glutamate receptors.</title>
        <authorList>
            <person name="Kato A."/>
            <person name="Ozawa F."/>
            <person name="Saitoh Y."/>
            <person name="Fukazawa Y."/>
            <person name="Sugiyama H."/>
            <person name="Inokuchi K."/>
        </authorList>
    </citation>
    <scope>NUCLEOTIDE SEQUENCE [MRNA] (ISOFORM 1)</scope>
    <scope>INTERACTION WITH GRM1 AND GRM5</scope>
    <source>
        <strain>Sprague-Dawley</strain>
        <tissue>Hippocampus</tissue>
    </source>
</reference>
<reference key="6">
    <citation type="journal article" date="2000" name="Biochem. Biophys. Res. Commun.">
        <title>Evidence for the presence of two homer 1 transcripts in skeletal and cardiac muscles.</title>
        <authorList>
            <person name="Sandona D."/>
            <person name="Tibaldo E."/>
            <person name="Volpe P."/>
        </authorList>
    </citation>
    <scope>NUCLEOTIDE SEQUENCE [MRNA] (ISOFORMS 1 AND 3)</scope>
    <scope>TISSUE SPECIFICITY</scope>
    <source>
        <tissue>Fast-twitch skeletal muscle</tissue>
    </source>
</reference>
<reference key="7">
    <citation type="journal article" date="1998" name="Neuron">
        <title>Homer binds a novel proline-rich motif and links group 1 metabotropic glutamate receptors with IP3 receptors.</title>
        <authorList>
            <person name="Tu J.C."/>
            <person name="Xiao B."/>
            <person name="Yuan J.P."/>
            <person name="Lanahan A.A."/>
            <person name="Leoffert K."/>
            <person name="Li M."/>
            <person name="Linden D.J."/>
            <person name="Worley P.F."/>
        </authorList>
    </citation>
    <scope>INTERACTION WITH GRM1; GRM5; DYN3 AND ITPR1</scope>
</reference>
<reference key="8">
    <citation type="journal article" date="1999" name="Neuron">
        <title>Coupling of mGluR/Homer and PSD-95 complexes by the Shank family of postsynaptic density proteins.</title>
        <authorList>
            <person name="Tu J.C."/>
            <person name="Xiao B."/>
            <person name="Naisbitt S."/>
            <person name="Yuan J.P."/>
            <person name="Petralia R.S."/>
            <person name="Brakeman P."/>
            <person name="Doan A."/>
            <person name="Aakalu V.K."/>
            <person name="Lanahan A.A."/>
            <person name="Sheng M."/>
            <person name="Worley P.F."/>
        </authorList>
    </citation>
    <scope>INTERACTION WITH SHANK1 AND SHANK3</scope>
    <scope>SUBCELLULAR LOCATION</scope>
</reference>
<reference key="9">
    <citation type="journal article" date="2003" name="Cell Calcium">
        <title>Vesl/Homer proteins regulate ryanodine receptor type 2 function and intracellular calcium signaling.</title>
        <authorList>
            <person name="Westhoff J.H."/>
            <person name="Hwang S.-Y."/>
            <person name="Scott Duncan R."/>
            <person name="Ozawa F."/>
            <person name="Volpe P."/>
            <person name="Inokuchi K."/>
            <person name="Koulen P."/>
        </authorList>
    </citation>
    <scope>INTERACTION WITH RYR2</scope>
</reference>
<reference key="10">
    <citation type="journal article" date="2003" name="Cell Calcium">
        <title>Differential functional interaction of two Vesl/Homer protein isoforms with ryanodine receptor type 1: a novel mechanism for control of intracellular calcium signaling.</title>
        <authorList>
            <person name="Hwang S.-Y."/>
            <person name="Wei J."/>
            <person name="Westhoff J.H."/>
            <person name="Duncan R.S."/>
            <person name="Ozawa F."/>
            <person name="Volpe P."/>
            <person name="Inokuchi K."/>
            <person name="Koulen P."/>
        </authorList>
    </citation>
    <scope>INTERACTION WITH RYR1</scope>
</reference>
<reference key="11">
    <citation type="journal article" date="2000" name="Curr. Opin. Neurobiol.">
        <title>Homer: a link between neural activity and glutamate receptor function.</title>
        <authorList>
            <person name="Xiao B."/>
            <person name="Tu J.C."/>
            <person name="Worley P.F."/>
        </authorList>
    </citation>
    <scope>REVIEW</scope>
</reference>
<reference key="12">
    <citation type="journal article" date="2003" name="Nat. Neurosci.">
        <title>PI3 kinase enhancer-Homer complex couples mGluRI to PI3 kinase, preventing neuronal apoptosis.</title>
        <authorList>
            <person name="Rong R."/>
            <person name="Ahn J.-Y."/>
            <person name="Huang H."/>
            <person name="Nagata E."/>
            <person name="Kalman D."/>
            <person name="Kapp J.A."/>
            <person name="Tu J."/>
            <person name="Worley P.F."/>
            <person name="Snyder S.H."/>
            <person name="Ye K."/>
        </authorList>
    </citation>
    <scope>INTERACTION WITH AGAP2</scope>
    <scope>FUNCTION</scope>
</reference>
<reference key="13">
    <citation type="journal article" date="2004" name="Nat. Neurosci.">
        <title>The X-linked mental retardation protein oligophrenin-1 is required for dendritic spine morphogenesis.</title>
        <authorList>
            <person name="Govek E.E."/>
            <person name="Newey S.E."/>
            <person name="Akerman C.J."/>
            <person name="Cross J.R."/>
            <person name="Van der Veken L."/>
            <person name="Van Aelst L."/>
        </authorList>
    </citation>
    <scope>INTERACTION WITH OPHN1</scope>
</reference>
<reference key="14">
    <citation type="journal article" date="2007" name="Mol. Pharmacol.">
        <title>A key role for diacylglycerol lipase-alpha in metabotropic glutamate receptor-dependent endocannabinoid mobilization.</title>
        <authorList>
            <person name="Jung K.M."/>
            <person name="Astarita G."/>
            <person name="Zhu C."/>
            <person name="Wallace M."/>
            <person name="Mackie K."/>
            <person name="Piomelli D."/>
        </authorList>
    </citation>
    <scope>INTERACTION WITH DAGLA</scope>
</reference>
<reference key="15">
    <citation type="journal article" date="2018" name="Cell Rep.">
        <title>Regulation of KIF1A-Driven Dense Core Vesicle Transport: Ca2+/CaM Controls DCV Binding and Liprin-alpha/TANC2 Recruits DCVs to Postsynaptic Sites.</title>
        <authorList>
            <person name="Stucchi R."/>
            <person name="Plucinska G."/>
            <person name="Hummel J.J.A."/>
            <person name="Zahavi E.E."/>
            <person name="Guerra San Juan I."/>
            <person name="Klykov O."/>
            <person name="Scheltema R.A."/>
            <person name="Altelaar A.F.M."/>
            <person name="Hoogenraad C.C."/>
        </authorList>
    </citation>
    <scope>SUBCELLULAR LOCATION</scope>
</reference>
<reference key="16">
    <citation type="journal article" date="2000" name="Neuron">
        <title>Structure of the Homer EVH1 domain-peptide complex reveals a new twist in polyproline recognition.</title>
        <authorList>
            <person name="Beneken J."/>
            <person name="Tu J.C."/>
            <person name="Xiao B."/>
            <person name="Nuriya M."/>
            <person name="Yuan J.P."/>
            <person name="Worley P.F."/>
            <person name="Leahy D.J."/>
        </authorList>
    </citation>
    <scope>X-RAY CRYSTALLOGRAPHY (1.9 ANGSTROMS) OF 1-111 IN COMPLEX WITH GRM5</scope>
    <scope>MUTAGENESIS OF TRP-24; THR-70; PHE-74; GLN-76; VAL-85 AND GLY-89</scope>
</reference>
<reference key="17">
    <citation type="journal article" date="2002" name="J. Mol. Biol.">
        <title>Crystal structure of the Homer 1 family conserved region reveals the interaction between the EVH1 domain and own proline-rich motif.</title>
        <authorList>
            <person name="Irie K."/>
            <person name="Nakatsu T."/>
            <person name="Mitsuoka K."/>
            <person name="Miyazawa A."/>
            <person name="Sobue K."/>
            <person name="Hiroaki Y."/>
            <person name="Doi T."/>
            <person name="Fujiyoshi Y."/>
            <person name="Kato H."/>
        </authorList>
    </citation>
    <scope>X-RAY CRYSTALLOGRAPHY (1.8 ANGSTROMS) OF 1-163</scope>
</reference>
<reference evidence="28" key="18">
    <citation type="journal article" date="2009" name="Cell">
        <title>The postsynaptic density proteins Homer and Shank form a polymeric network structure.</title>
        <authorList>
            <person name="Hayashi M.K."/>
            <person name="Tang C."/>
            <person name="Verpelli C."/>
            <person name="Narayanan R."/>
            <person name="Stearns M.H."/>
            <person name="Xu R.M."/>
            <person name="Li H."/>
            <person name="Sala C."/>
            <person name="Hayashi Y."/>
        </authorList>
    </citation>
    <scope>X-RAY CRYSTALLOGRAPHY (1.75 ANGSTROMS) OF 302-366 OF TETRAMER OF MUTANT MET-320</scope>
    <scope>INTERACTION WITH SHANK1</scope>
    <scope>MUTAGENESIS OF TRP-24; ILE-344 AND ILE-349</scope>
    <scope>FUNCTION</scope>
    <scope>SUBCELLULAR LOCATION</scope>
    <scope>DOMAIN</scope>
</reference>
<protein>
    <recommendedName>
        <fullName evidence="26">Homer protein homolog 1</fullName>
    </recommendedName>
    <alternativeName>
        <fullName evidence="25">PSD-Zip45</fullName>
    </alternativeName>
    <alternativeName>
        <fullName>VASP/Ena-related gene up-regulated during seizure and LTP 1</fullName>
        <shortName evidence="3">Vesl-1</shortName>
    </alternativeName>
</protein>
<gene>
    <name evidence="27" type="primary">Homer1</name>
    <name type="synonym">Homer</name>
    <name type="synonym">Vesl</name>
</gene>
<proteinExistence type="evidence at protein level"/>
<dbReference type="EMBL" id="U92079">
    <property type="protein sequence ID" value="AAC53113.1"/>
    <property type="status" value="ALT_INIT"/>
    <property type="molecule type" value="mRNA"/>
</dbReference>
<dbReference type="EMBL" id="AB003726">
    <property type="protein sequence ID" value="BAA21671.1"/>
    <property type="molecule type" value="mRNA"/>
</dbReference>
<dbReference type="EMBL" id="AF093267">
    <property type="protein sequence ID" value="AAC71031.1"/>
    <property type="molecule type" value="mRNA"/>
</dbReference>
<dbReference type="EMBL" id="AF093268">
    <property type="protein sequence ID" value="AAC71032.1"/>
    <property type="molecule type" value="mRNA"/>
</dbReference>
<dbReference type="EMBL" id="AB017140">
    <property type="protein sequence ID" value="BAA34311.1"/>
    <property type="molecule type" value="mRNA"/>
</dbReference>
<dbReference type="EMBL" id="AB007688">
    <property type="protein sequence ID" value="BAA32477.1"/>
    <property type="molecule type" value="mRNA"/>
</dbReference>
<dbReference type="EMBL" id="AJ276327">
    <property type="protein sequence ID" value="CAB77249.1"/>
    <property type="molecule type" value="mRNA"/>
</dbReference>
<dbReference type="EMBL" id="AJ276328">
    <property type="protein sequence ID" value="CAB77250.1"/>
    <property type="molecule type" value="mRNA"/>
</dbReference>
<dbReference type="RefSeq" id="NP_113895.1">
    <molecule id="Q9Z214-1"/>
    <property type="nucleotide sequence ID" value="NM_031707.2"/>
</dbReference>
<dbReference type="RefSeq" id="XP_006231837.1">
    <molecule id="Q9Z214-2"/>
    <property type="nucleotide sequence ID" value="XM_006231775.5"/>
</dbReference>
<dbReference type="PDB" id="1DDV">
    <property type="method" value="X-ray"/>
    <property type="resolution" value="1.90 A"/>
    <property type="chains" value="A=1-111"/>
</dbReference>
<dbReference type="PDB" id="1DDW">
    <property type="method" value="X-ray"/>
    <property type="resolution" value="1.70 A"/>
    <property type="chains" value="A=1-120"/>
</dbReference>
<dbReference type="PDB" id="1I2H">
    <property type="method" value="X-ray"/>
    <property type="resolution" value="1.80 A"/>
    <property type="chains" value="A=1-163"/>
</dbReference>
<dbReference type="PDB" id="3CVE">
    <property type="method" value="X-ray"/>
    <property type="resolution" value="1.75 A"/>
    <property type="chains" value="A/B/C/D=302-366"/>
</dbReference>
<dbReference type="PDBsum" id="1DDV"/>
<dbReference type="PDBsum" id="1DDW"/>
<dbReference type="PDBsum" id="1I2H"/>
<dbReference type="PDBsum" id="3CVE"/>
<dbReference type="BMRB" id="Q9Z214"/>
<dbReference type="SMR" id="Q9Z214"/>
<dbReference type="BioGRID" id="248180">
    <property type="interactions" value="17"/>
</dbReference>
<dbReference type="ELM" id="Q9Z214"/>
<dbReference type="FunCoup" id="Q9Z214">
    <property type="interactions" value="1102"/>
</dbReference>
<dbReference type="IntAct" id="Q9Z214">
    <property type="interactions" value="12"/>
</dbReference>
<dbReference type="MINT" id="Q9Z214"/>
<dbReference type="STRING" id="10116.ENSRNOP00000065989"/>
<dbReference type="GlyGen" id="Q9Z214">
    <property type="glycosylation" value="1 site, 1 O-linked glycan (1 site)"/>
</dbReference>
<dbReference type="iPTMnet" id="Q9Z214"/>
<dbReference type="PhosphoSitePlus" id="Q9Z214"/>
<dbReference type="SwissPalm" id="Q9Z214"/>
<dbReference type="PaxDb" id="10116-ENSRNOP00000065989"/>
<dbReference type="ABCD" id="Q9Z214">
    <property type="antibodies" value="4 sequenced antibodies"/>
</dbReference>
<dbReference type="Ensembl" id="ENSRNOT00000071804.4">
    <molecule id="Q9Z214-1"/>
    <property type="protein sequence ID" value="ENSRNOP00000065989.3"/>
    <property type="gene ID" value="ENSRNOG00000047014.4"/>
</dbReference>
<dbReference type="GeneID" id="29546"/>
<dbReference type="KEGG" id="rno:29546"/>
<dbReference type="AGR" id="RGD:628725"/>
<dbReference type="CTD" id="9456"/>
<dbReference type="RGD" id="628725">
    <property type="gene designation" value="Homer1"/>
</dbReference>
<dbReference type="eggNOG" id="ENOG502QR3K">
    <property type="taxonomic scope" value="Eukaryota"/>
</dbReference>
<dbReference type="GeneTree" id="ENSGT00940000156354"/>
<dbReference type="HOGENOM" id="CLU_033940_0_0_1"/>
<dbReference type="InParanoid" id="Q9Z214"/>
<dbReference type="OMA" id="QXSAISK"/>
<dbReference type="OrthoDB" id="50604at9989"/>
<dbReference type="PhylomeDB" id="Q9Z214"/>
<dbReference type="Reactome" id="R-RNO-6794361">
    <property type="pathway name" value="Neurexins and neuroligins"/>
</dbReference>
<dbReference type="EvolutionaryTrace" id="Q9Z214"/>
<dbReference type="PRO" id="PR:Q9Z214"/>
<dbReference type="Proteomes" id="UP000002494">
    <property type="component" value="Chromosome 2"/>
</dbReference>
<dbReference type="Bgee" id="ENSRNOG00000047014">
    <property type="expression patterns" value="Expressed in frontal cortex and 19 other cell types or tissues"/>
</dbReference>
<dbReference type="ExpressionAtlas" id="Q9Z214">
    <property type="expression patterns" value="baseline and differential"/>
</dbReference>
<dbReference type="GO" id="GO:0045177">
    <property type="term" value="C:apical part of cell"/>
    <property type="evidence" value="ECO:0000266"/>
    <property type="project" value="RGD"/>
</dbReference>
<dbReference type="GO" id="GO:0030424">
    <property type="term" value="C:axon"/>
    <property type="evidence" value="ECO:0000266"/>
    <property type="project" value="RGD"/>
</dbReference>
<dbReference type="GO" id="GO:0043034">
    <property type="term" value="C:costamere"/>
    <property type="evidence" value="ECO:0000266"/>
    <property type="project" value="RGD"/>
</dbReference>
<dbReference type="GO" id="GO:0005737">
    <property type="term" value="C:cytoplasm"/>
    <property type="evidence" value="ECO:0000266"/>
    <property type="project" value="RGD"/>
</dbReference>
<dbReference type="GO" id="GO:0005829">
    <property type="term" value="C:cytosol"/>
    <property type="evidence" value="ECO:0000304"/>
    <property type="project" value="Reactome"/>
</dbReference>
<dbReference type="GO" id="GO:0030425">
    <property type="term" value="C:dendrite"/>
    <property type="evidence" value="ECO:0000314"/>
    <property type="project" value="RGD"/>
</dbReference>
<dbReference type="GO" id="GO:0043198">
    <property type="term" value="C:dendritic shaft"/>
    <property type="evidence" value="ECO:0000314"/>
    <property type="project" value="RGD"/>
</dbReference>
<dbReference type="GO" id="GO:0043197">
    <property type="term" value="C:dendritic spine"/>
    <property type="evidence" value="ECO:0000314"/>
    <property type="project" value="UniProtKB"/>
</dbReference>
<dbReference type="GO" id="GO:0060076">
    <property type="term" value="C:excitatory synapse"/>
    <property type="evidence" value="ECO:0000314"/>
    <property type="project" value="RGD"/>
</dbReference>
<dbReference type="GO" id="GO:0098978">
    <property type="term" value="C:glutamatergic synapse"/>
    <property type="evidence" value="ECO:0000314"/>
    <property type="project" value="SynGO"/>
</dbReference>
<dbReference type="GO" id="GO:0016020">
    <property type="term" value="C:membrane"/>
    <property type="evidence" value="ECO:0000266"/>
    <property type="project" value="RGD"/>
</dbReference>
<dbReference type="GO" id="GO:0043005">
    <property type="term" value="C:neuron projection"/>
    <property type="evidence" value="ECO:0000266"/>
    <property type="project" value="RGD"/>
</dbReference>
<dbReference type="GO" id="GO:0044309">
    <property type="term" value="C:neuron spine"/>
    <property type="evidence" value="ECO:0000314"/>
    <property type="project" value="UniProtKB"/>
</dbReference>
<dbReference type="GO" id="GO:0043025">
    <property type="term" value="C:neuronal cell body"/>
    <property type="evidence" value="ECO:0000314"/>
    <property type="project" value="RGD"/>
</dbReference>
<dbReference type="GO" id="GO:0005886">
    <property type="term" value="C:plasma membrane"/>
    <property type="evidence" value="ECO:0000266"/>
    <property type="project" value="RGD"/>
</dbReference>
<dbReference type="GO" id="GO:0098794">
    <property type="term" value="C:postsynapse"/>
    <property type="evidence" value="ECO:0000266"/>
    <property type="project" value="RGD"/>
</dbReference>
<dbReference type="GO" id="GO:0099524">
    <property type="term" value="C:postsynaptic cytosol"/>
    <property type="evidence" value="ECO:0000266"/>
    <property type="project" value="RGD"/>
</dbReference>
<dbReference type="GO" id="GO:0014069">
    <property type="term" value="C:postsynaptic density"/>
    <property type="evidence" value="ECO:0000314"/>
    <property type="project" value="BHF-UCL"/>
</dbReference>
<dbReference type="GO" id="GO:0030018">
    <property type="term" value="C:Z disc"/>
    <property type="evidence" value="ECO:0000266"/>
    <property type="project" value="RGD"/>
</dbReference>
<dbReference type="GO" id="GO:0035256">
    <property type="term" value="F:G protein-coupled glutamate receptor binding"/>
    <property type="evidence" value="ECO:0000353"/>
    <property type="project" value="UniProtKB"/>
</dbReference>
<dbReference type="GO" id="GO:0042802">
    <property type="term" value="F:identical protein binding"/>
    <property type="evidence" value="ECO:0000353"/>
    <property type="project" value="IntAct"/>
</dbReference>
<dbReference type="GO" id="GO:0060090">
    <property type="term" value="F:molecular adaptor activity"/>
    <property type="evidence" value="ECO:0000353"/>
    <property type="project" value="BHF-UCL"/>
</dbReference>
<dbReference type="GO" id="GO:0044877">
    <property type="term" value="F:protein-containing complex binding"/>
    <property type="evidence" value="ECO:0000353"/>
    <property type="project" value="RGD"/>
</dbReference>
<dbReference type="GO" id="GO:0097110">
    <property type="term" value="F:scaffold protein binding"/>
    <property type="evidence" value="ECO:0000353"/>
    <property type="project" value="BHF-UCL"/>
</dbReference>
<dbReference type="GO" id="GO:0005102">
    <property type="term" value="F:signaling receptor binding"/>
    <property type="evidence" value="ECO:0000314"/>
    <property type="project" value="RGD"/>
</dbReference>
<dbReference type="GO" id="GO:0099186">
    <property type="term" value="F:structural constituent of postsynapse"/>
    <property type="evidence" value="ECO:0000314"/>
    <property type="project" value="SynGO"/>
</dbReference>
<dbReference type="GO" id="GO:0044325">
    <property type="term" value="F:transmembrane transporter binding"/>
    <property type="evidence" value="ECO:0000266"/>
    <property type="project" value="RGD"/>
</dbReference>
<dbReference type="GO" id="GO:0031802">
    <property type="term" value="F:type 5 metabotropic glutamate receptor binding"/>
    <property type="evidence" value="ECO:0000353"/>
    <property type="project" value="RGD"/>
</dbReference>
<dbReference type="GO" id="GO:0048148">
    <property type="term" value="P:behavioral response to cocaine"/>
    <property type="evidence" value="ECO:0000266"/>
    <property type="project" value="RGD"/>
</dbReference>
<dbReference type="GO" id="GO:0007623">
    <property type="term" value="P:circadian rhythm"/>
    <property type="evidence" value="ECO:0000270"/>
    <property type="project" value="RGD"/>
</dbReference>
<dbReference type="GO" id="GO:0007216">
    <property type="term" value="P:G protein-coupled glutamate receptor signaling pathway"/>
    <property type="evidence" value="ECO:0000314"/>
    <property type="project" value="RGD"/>
</dbReference>
<dbReference type="GO" id="GO:0051928">
    <property type="term" value="P:positive regulation of calcium ion transport"/>
    <property type="evidence" value="ECO:0000266"/>
    <property type="project" value="RGD"/>
</dbReference>
<dbReference type="GO" id="GO:0035418">
    <property type="term" value="P:protein localization to synapse"/>
    <property type="evidence" value="ECO:0000314"/>
    <property type="project" value="BHF-UCL"/>
</dbReference>
<dbReference type="GO" id="GO:0051262">
    <property type="term" value="P:protein tetramerization"/>
    <property type="evidence" value="ECO:0000314"/>
    <property type="project" value="UniProtKB"/>
</dbReference>
<dbReference type="GO" id="GO:0090279">
    <property type="term" value="P:regulation of calcium ion import"/>
    <property type="evidence" value="ECO:0000266"/>
    <property type="project" value="RGD"/>
</dbReference>
<dbReference type="GO" id="GO:1902950">
    <property type="term" value="P:regulation of dendritic spine maintenance"/>
    <property type="evidence" value="ECO:0000315"/>
    <property type="project" value="UniProtKB"/>
</dbReference>
<dbReference type="GO" id="GO:2001256">
    <property type="term" value="P:regulation of store-operated calcium entry"/>
    <property type="evidence" value="ECO:0000266"/>
    <property type="project" value="RGD"/>
</dbReference>
<dbReference type="GO" id="GO:0051966">
    <property type="term" value="P:regulation of synaptic transmission, glutamatergic"/>
    <property type="evidence" value="ECO:0000315"/>
    <property type="project" value="UniProtKB"/>
</dbReference>
<dbReference type="GO" id="GO:0051592">
    <property type="term" value="P:response to calcium ion"/>
    <property type="evidence" value="ECO:0000266"/>
    <property type="project" value="RGD"/>
</dbReference>
<dbReference type="GO" id="GO:0042220">
    <property type="term" value="P:response to cocaine"/>
    <property type="evidence" value="ECO:0000270"/>
    <property type="project" value="RGD"/>
</dbReference>
<dbReference type="GO" id="GO:0035094">
    <property type="term" value="P:response to nicotine"/>
    <property type="evidence" value="ECO:0000270"/>
    <property type="project" value="RGD"/>
</dbReference>
<dbReference type="GO" id="GO:0003009">
    <property type="term" value="P:skeletal muscle contraction"/>
    <property type="evidence" value="ECO:0000266"/>
    <property type="project" value="RGD"/>
</dbReference>
<dbReference type="GO" id="GO:0048741">
    <property type="term" value="P:skeletal muscle fiber development"/>
    <property type="evidence" value="ECO:0000266"/>
    <property type="project" value="RGD"/>
</dbReference>
<dbReference type="CDD" id="cd01206">
    <property type="entry name" value="EVH1_Homer_Vesl"/>
    <property type="match status" value="1"/>
</dbReference>
<dbReference type="FunFam" id="1.20.5.1700:FF:000003">
    <property type="entry name" value="Homer homolog 1 (Drosophila)"/>
    <property type="match status" value="1"/>
</dbReference>
<dbReference type="FunFam" id="2.30.29.30:FF:000014">
    <property type="entry name" value="Homer homolog 1 (Drosophila)"/>
    <property type="match status" value="1"/>
</dbReference>
<dbReference type="Gene3D" id="1.20.5.1700">
    <property type="match status" value="1"/>
</dbReference>
<dbReference type="Gene3D" id="2.30.29.30">
    <property type="entry name" value="Pleckstrin-homology domain (PH domain)/Phosphotyrosine-binding domain (PTB)"/>
    <property type="match status" value="1"/>
</dbReference>
<dbReference type="InterPro" id="IPR045027">
    <property type="entry name" value="Homer"/>
</dbReference>
<dbReference type="InterPro" id="IPR044100">
    <property type="entry name" value="Homer_EVH1"/>
</dbReference>
<dbReference type="InterPro" id="IPR011993">
    <property type="entry name" value="PH-like_dom_sf"/>
</dbReference>
<dbReference type="InterPro" id="IPR000697">
    <property type="entry name" value="WH1/EVH1_dom"/>
</dbReference>
<dbReference type="PANTHER" id="PTHR10918">
    <property type="entry name" value="HOMER"/>
    <property type="match status" value="1"/>
</dbReference>
<dbReference type="Pfam" id="PF00568">
    <property type="entry name" value="WH1"/>
    <property type="match status" value="1"/>
</dbReference>
<dbReference type="SMART" id="SM00461">
    <property type="entry name" value="WH1"/>
    <property type="match status" value="1"/>
</dbReference>
<dbReference type="SUPFAM" id="SSF50729">
    <property type="entry name" value="PH domain-like"/>
    <property type="match status" value="1"/>
</dbReference>
<dbReference type="SUPFAM" id="SSF57997">
    <property type="entry name" value="Tropomyosin"/>
    <property type="match status" value="1"/>
</dbReference>
<dbReference type="PROSITE" id="PS50229">
    <property type="entry name" value="WH1"/>
    <property type="match status" value="1"/>
</dbReference>
<accession>Q9Z214</accession>
<accession>O08567</accession>
<accession>O88800</accession>
<accession>Q9QUJ8</accession>
<accession>Q9QWN5</accession>
<organism>
    <name type="scientific">Rattus norvegicus</name>
    <name type="common">Rat</name>
    <dbReference type="NCBI Taxonomy" id="10116"/>
    <lineage>
        <taxon>Eukaryota</taxon>
        <taxon>Metazoa</taxon>
        <taxon>Chordata</taxon>
        <taxon>Craniata</taxon>
        <taxon>Vertebrata</taxon>
        <taxon>Euteleostomi</taxon>
        <taxon>Mammalia</taxon>
        <taxon>Eutheria</taxon>
        <taxon>Euarchontoglires</taxon>
        <taxon>Glires</taxon>
        <taxon>Rodentia</taxon>
        <taxon>Myomorpha</taxon>
        <taxon>Muroidea</taxon>
        <taxon>Muridae</taxon>
        <taxon>Murinae</taxon>
        <taxon>Rattus</taxon>
    </lineage>
</organism>
<name>HOME1_RAT</name>
<sequence length="366" mass="41305">MGEQPIFSTRAHVFQIDPNTKKNWVPTSKHAVTVSYFYDSTRNVYRIISLDGSKAIINSTITPNMTFTKTSQKFGQWADSRANTVYGLGFSSEHHLSKFAEKFQEFKEAARLAKEKSQEKMELTSTPSQESAGGDLQSPLTPESINGTDDERTPDVTQNSEPRAEPAQNALPFSHSAGDRTQGLSHASSAISKHWEAELATLKGNNAKLTAALLESTANVKQWKQQLAAYQEEAERLHKRVTELECVSSQANAVHSHKTELSQTVQELEETLKVKEEEIERLKQEIDNARELQEQRDSLTQKLQEVEIRNKDLEGQLSELEQRLEKSQSEQDAFRSNLKTLLEILDGKIFELTELRDNLAKLLECS</sequence>
<keyword id="KW-0002">3D-structure</keyword>
<keyword id="KW-0007">Acetylation</keyword>
<keyword id="KW-0025">Alternative splicing</keyword>
<keyword id="KW-0966">Cell projection</keyword>
<keyword id="KW-0175">Coiled coil</keyword>
<keyword id="KW-0963">Cytoplasm</keyword>
<keyword id="KW-0597">Phosphoprotein</keyword>
<keyword id="KW-1185">Reference proteome</keyword>
<keyword id="KW-0770">Synapse</keyword>